<evidence type="ECO:0000255" key="1">
    <source>
        <dbReference type="HAMAP-Rule" id="MF_00451"/>
    </source>
</evidence>
<dbReference type="EC" id="2.7.4.6" evidence="1"/>
<dbReference type="EMBL" id="AM295250">
    <property type="protein sequence ID" value="CAL28009.1"/>
    <property type="molecule type" value="Genomic_DNA"/>
</dbReference>
<dbReference type="RefSeq" id="WP_015900350.1">
    <property type="nucleotide sequence ID" value="NC_012121.1"/>
</dbReference>
<dbReference type="SMR" id="B9DNV3"/>
<dbReference type="GeneID" id="93793527"/>
<dbReference type="KEGG" id="sca:SCA_1101"/>
<dbReference type="eggNOG" id="COG0105">
    <property type="taxonomic scope" value="Bacteria"/>
</dbReference>
<dbReference type="HOGENOM" id="CLU_060216_6_3_9"/>
<dbReference type="OrthoDB" id="9801161at2"/>
<dbReference type="BioCyc" id="SCAR396513:SCA_RS05515-MONOMER"/>
<dbReference type="Proteomes" id="UP000000444">
    <property type="component" value="Chromosome"/>
</dbReference>
<dbReference type="GO" id="GO:0005737">
    <property type="term" value="C:cytoplasm"/>
    <property type="evidence" value="ECO:0007669"/>
    <property type="project" value="UniProtKB-SubCell"/>
</dbReference>
<dbReference type="GO" id="GO:0005524">
    <property type="term" value="F:ATP binding"/>
    <property type="evidence" value="ECO:0007669"/>
    <property type="project" value="UniProtKB-UniRule"/>
</dbReference>
<dbReference type="GO" id="GO:0046872">
    <property type="term" value="F:metal ion binding"/>
    <property type="evidence" value="ECO:0007669"/>
    <property type="project" value="UniProtKB-KW"/>
</dbReference>
<dbReference type="GO" id="GO:0004550">
    <property type="term" value="F:nucleoside diphosphate kinase activity"/>
    <property type="evidence" value="ECO:0007669"/>
    <property type="project" value="UniProtKB-UniRule"/>
</dbReference>
<dbReference type="GO" id="GO:0006241">
    <property type="term" value="P:CTP biosynthetic process"/>
    <property type="evidence" value="ECO:0007669"/>
    <property type="project" value="UniProtKB-UniRule"/>
</dbReference>
<dbReference type="GO" id="GO:0006183">
    <property type="term" value="P:GTP biosynthetic process"/>
    <property type="evidence" value="ECO:0007669"/>
    <property type="project" value="UniProtKB-UniRule"/>
</dbReference>
<dbReference type="GO" id="GO:0006228">
    <property type="term" value="P:UTP biosynthetic process"/>
    <property type="evidence" value="ECO:0007669"/>
    <property type="project" value="UniProtKB-UniRule"/>
</dbReference>
<dbReference type="CDD" id="cd04413">
    <property type="entry name" value="NDPk_I"/>
    <property type="match status" value="1"/>
</dbReference>
<dbReference type="FunFam" id="3.30.70.141:FF:000002">
    <property type="entry name" value="Nucleoside diphosphate kinase"/>
    <property type="match status" value="1"/>
</dbReference>
<dbReference type="Gene3D" id="3.30.70.141">
    <property type="entry name" value="Nucleoside diphosphate kinase-like domain"/>
    <property type="match status" value="1"/>
</dbReference>
<dbReference type="HAMAP" id="MF_00451">
    <property type="entry name" value="NDP_kinase"/>
    <property type="match status" value="1"/>
</dbReference>
<dbReference type="InterPro" id="IPR034907">
    <property type="entry name" value="NDK-like_dom"/>
</dbReference>
<dbReference type="InterPro" id="IPR036850">
    <property type="entry name" value="NDK-like_dom_sf"/>
</dbReference>
<dbReference type="InterPro" id="IPR001564">
    <property type="entry name" value="Nucleoside_diP_kinase"/>
</dbReference>
<dbReference type="InterPro" id="IPR023005">
    <property type="entry name" value="Nucleoside_diP_kinase_AS"/>
</dbReference>
<dbReference type="NCBIfam" id="NF001908">
    <property type="entry name" value="PRK00668.1"/>
    <property type="match status" value="1"/>
</dbReference>
<dbReference type="PANTHER" id="PTHR11349">
    <property type="entry name" value="NUCLEOSIDE DIPHOSPHATE KINASE"/>
    <property type="match status" value="1"/>
</dbReference>
<dbReference type="Pfam" id="PF00334">
    <property type="entry name" value="NDK"/>
    <property type="match status" value="1"/>
</dbReference>
<dbReference type="PRINTS" id="PR01243">
    <property type="entry name" value="NUCDPKINASE"/>
</dbReference>
<dbReference type="SMART" id="SM00562">
    <property type="entry name" value="NDK"/>
    <property type="match status" value="1"/>
</dbReference>
<dbReference type="SUPFAM" id="SSF54919">
    <property type="entry name" value="Nucleoside diphosphate kinase, NDK"/>
    <property type="match status" value="1"/>
</dbReference>
<dbReference type="PROSITE" id="PS00469">
    <property type="entry name" value="NDPK"/>
    <property type="match status" value="1"/>
</dbReference>
<dbReference type="PROSITE" id="PS51374">
    <property type="entry name" value="NDPK_LIKE"/>
    <property type="match status" value="1"/>
</dbReference>
<organism>
    <name type="scientific">Staphylococcus carnosus (strain TM300)</name>
    <dbReference type="NCBI Taxonomy" id="396513"/>
    <lineage>
        <taxon>Bacteria</taxon>
        <taxon>Bacillati</taxon>
        <taxon>Bacillota</taxon>
        <taxon>Bacilli</taxon>
        <taxon>Bacillales</taxon>
        <taxon>Staphylococcaceae</taxon>
        <taxon>Staphylococcus</taxon>
    </lineage>
</organism>
<feature type="chain" id="PRO_1000192291" description="Nucleoside diphosphate kinase">
    <location>
        <begin position="1"/>
        <end position="150"/>
    </location>
</feature>
<feature type="active site" description="Pros-phosphohistidine intermediate" evidence="1">
    <location>
        <position position="115"/>
    </location>
</feature>
<feature type="binding site" evidence="1">
    <location>
        <position position="9"/>
    </location>
    <ligand>
        <name>ATP</name>
        <dbReference type="ChEBI" id="CHEBI:30616"/>
    </ligand>
</feature>
<feature type="binding site" evidence="1">
    <location>
        <position position="57"/>
    </location>
    <ligand>
        <name>ATP</name>
        <dbReference type="ChEBI" id="CHEBI:30616"/>
    </ligand>
</feature>
<feature type="binding site" evidence="1">
    <location>
        <position position="85"/>
    </location>
    <ligand>
        <name>ATP</name>
        <dbReference type="ChEBI" id="CHEBI:30616"/>
    </ligand>
</feature>
<feature type="binding site" evidence="1">
    <location>
        <position position="91"/>
    </location>
    <ligand>
        <name>ATP</name>
        <dbReference type="ChEBI" id="CHEBI:30616"/>
    </ligand>
</feature>
<feature type="binding site" evidence="1">
    <location>
        <position position="102"/>
    </location>
    <ligand>
        <name>ATP</name>
        <dbReference type="ChEBI" id="CHEBI:30616"/>
    </ligand>
</feature>
<feature type="binding site" evidence="1">
    <location>
        <position position="112"/>
    </location>
    <ligand>
        <name>ATP</name>
        <dbReference type="ChEBI" id="CHEBI:30616"/>
    </ligand>
</feature>
<keyword id="KW-0067">ATP-binding</keyword>
<keyword id="KW-0963">Cytoplasm</keyword>
<keyword id="KW-0418">Kinase</keyword>
<keyword id="KW-0460">Magnesium</keyword>
<keyword id="KW-0479">Metal-binding</keyword>
<keyword id="KW-0546">Nucleotide metabolism</keyword>
<keyword id="KW-0547">Nucleotide-binding</keyword>
<keyword id="KW-0597">Phosphoprotein</keyword>
<keyword id="KW-1185">Reference proteome</keyword>
<keyword id="KW-0808">Transferase</keyword>
<protein>
    <recommendedName>
        <fullName evidence="1">Nucleoside diphosphate kinase</fullName>
        <shortName evidence="1">NDK</shortName>
        <shortName evidence="1">NDP kinase</shortName>
        <ecNumber evidence="1">2.7.4.6</ecNumber>
    </recommendedName>
    <alternativeName>
        <fullName evidence="1">Nucleoside-2-P kinase</fullName>
    </alternativeName>
</protein>
<reference key="1">
    <citation type="journal article" date="2009" name="Appl. Environ. Microbiol.">
        <title>Genome analysis of the meat starter culture bacterium Staphylococcus carnosus TM300.</title>
        <authorList>
            <person name="Rosenstein R."/>
            <person name="Nerz C."/>
            <person name="Biswas L."/>
            <person name="Resch A."/>
            <person name="Raddatz G."/>
            <person name="Schuster S.C."/>
            <person name="Goetz F."/>
        </authorList>
    </citation>
    <scope>NUCLEOTIDE SEQUENCE [LARGE SCALE GENOMIC DNA]</scope>
    <source>
        <strain>TM300</strain>
    </source>
</reference>
<sequence>MERTFLMIKPDGVQRKLVGEIITRLEKKGLKLVGGKFMTVSKEKAETHYGEHADKPFYEGLVSFITSAPVFAMVVEGENVVEVTRNMIGKTNPTEAAPGTIRGDLGLTVGRNVIHGSDSVESAKREISLWFEPNELSVYTANDEEWLYEN</sequence>
<name>NDK_STACT</name>
<proteinExistence type="inferred from homology"/>
<accession>B9DNV3</accession>
<comment type="function">
    <text evidence="1">Major role in the synthesis of nucleoside triphosphates other than ATP. The ATP gamma phosphate is transferred to the NDP beta phosphate via a ping-pong mechanism, using a phosphorylated active-site intermediate.</text>
</comment>
<comment type="catalytic activity">
    <reaction evidence="1">
        <text>a 2'-deoxyribonucleoside 5'-diphosphate + ATP = a 2'-deoxyribonucleoside 5'-triphosphate + ADP</text>
        <dbReference type="Rhea" id="RHEA:44640"/>
        <dbReference type="ChEBI" id="CHEBI:30616"/>
        <dbReference type="ChEBI" id="CHEBI:61560"/>
        <dbReference type="ChEBI" id="CHEBI:73316"/>
        <dbReference type="ChEBI" id="CHEBI:456216"/>
        <dbReference type="EC" id="2.7.4.6"/>
    </reaction>
</comment>
<comment type="catalytic activity">
    <reaction evidence="1">
        <text>a ribonucleoside 5'-diphosphate + ATP = a ribonucleoside 5'-triphosphate + ADP</text>
        <dbReference type="Rhea" id="RHEA:18113"/>
        <dbReference type="ChEBI" id="CHEBI:30616"/>
        <dbReference type="ChEBI" id="CHEBI:57930"/>
        <dbReference type="ChEBI" id="CHEBI:61557"/>
        <dbReference type="ChEBI" id="CHEBI:456216"/>
        <dbReference type="EC" id="2.7.4.6"/>
    </reaction>
</comment>
<comment type="cofactor">
    <cofactor evidence="1">
        <name>Mg(2+)</name>
        <dbReference type="ChEBI" id="CHEBI:18420"/>
    </cofactor>
</comment>
<comment type="subunit">
    <text evidence="1">Homotetramer.</text>
</comment>
<comment type="subcellular location">
    <subcellularLocation>
        <location evidence="1">Cytoplasm</location>
    </subcellularLocation>
</comment>
<comment type="similarity">
    <text evidence="1">Belongs to the NDK family.</text>
</comment>
<gene>
    <name evidence="1" type="primary">ndk</name>
    <name type="ordered locus">Sca_1101</name>
</gene>